<organism>
    <name type="scientific">Streptococcus pneumoniae serotype 19F (strain G54)</name>
    <dbReference type="NCBI Taxonomy" id="512566"/>
    <lineage>
        <taxon>Bacteria</taxon>
        <taxon>Bacillati</taxon>
        <taxon>Bacillota</taxon>
        <taxon>Bacilli</taxon>
        <taxon>Lactobacillales</taxon>
        <taxon>Streptococcaceae</taxon>
        <taxon>Streptococcus</taxon>
    </lineage>
</organism>
<accession>B5E641</accession>
<proteinExistence type="inferred from homology"/>
<dbReference type="EMBL" id="CP001015">
    <property type="protein sequence ID" value="ACF56276.1"/>
    <property type="molecule type" value="Genomic_DNA"/>
</dbReference>
<dbReference type="SMR" id="B5E641"/>
<dbReference type="KEGG" id="spx:SPG_1401"/>
<dbReference type="HOGENOM" id="CLU_173137_0_2_9"/>
<dbReference type="GO" id="GO:0005737">
    <property type="term" value="C:cytoplasm"/>
    <property type="evidence" value="ECO:0007669"/>
    <property type="project" value="UniProtKB-SubCell"/>
</dbReference>
<dbReference type="Gene3D" id="1.10.287.540">
    <property type="entry name" value="Helix hairpin bin"/>
    <property type="match status" value="1"/>
</dbReference>
<dbReference type="HAMAP" id="MF_01103">
    <property type="entry name" value="UPF0291"/>
    <property type="match status" value="1"/>
</dbReference>
<dbReference type="InterPro" id="IPR009242">
    <property type="entry name" value="DUF896"/>
</dbReference>
<dbReference type="NCBIfam" id="NF002711">
    <property type="entry name" value="PRK02539.1"/>
    <property type="match status" value="1"/>
</dbReference>
<dbReference type="PANTHER" id="PTHR37300">
    <property type="entry name" value="UPF0291 PROTEIN CBO2609/CLC_2481"/>
    <property type="match status" value="1"/>
</dbReference>
<dbReference type="PANTHER" id="PTHR37300:SF1">
    <property type="entry name" value="UPF0291 PROTEIN YNZC"/>
    <property type="match status" value="1"/>
</dbReference>
<dbReference type="Pfam" id="PF05979">
    <property type="entry name" value="DUF896"/>
    <property type="match status" value="1"/>
</dbReference>
<dbReference type="SUPFAM" id="SSF158221">
    <property type="entry name" value="YnzC-like"/>
    <property type="match status" value="1"/>
</dbReference>
<reference key="1">
    <citation type="journal article" date="2001" name="Microb. Drug Resist.">
        <title>Annotated draft genomic sequence from a Streptococcus pneumoniae type 19F clinical isolate.</title>
        <authorList>
            <person name="Dopazo J."/>
            <person name="Mendoza A."/>
            <person name="Herrero J."/>
            <person name="Caldara F."/>
            <person name="Humbert Y."/>
            <person name="Friedli L."/>
            <person name="Guerrier M."/>
            <person name="Grand-Schenk E."/>
            <person name="Gandin C."/>
            <person name="de Francesco M."/>
            <person name="Polissi A."/>
            <person name="Buell G."/>
            <person name="Feger G."/>
            <person name="Garcia E."/>
            <person name="Peitsch M."/>
            <person name="Garcia-Bustos J.F."/>
        </authorList>
    </citation>
    <scope>NUCLEOTIDE SEQUENCE [LARGE SCALE GENOMIC DNA]</scope>
    <source>
        <strain>G54</strain>
    </source>
</reference>
<reference key="2">
    <citation type="submission" date="2008-03" db="EMBL/GenBank/DDBJ databases">
        <title>Pneumococcal beta glucoside metabolism investigated by whole genome comparison.</title>
        <authorList>
            <person name="Mulas L."/>
            <person name="Trappetti C."/>
            <person name="Hakenbeck R."/>
            <person name="Iannelli F."/>
            <person name="Pozzi G."/>
            <person name="Davidsen T.M."/>
            <person name="Tettelin H."/>
            <person name="Oggioni M."/>
        </authorList>
    </citation>
    <scope>NUCLEOTIDE SEQUENCE [LARGE SCALE GENOMIC DNA]</scope>
    <source>
        <strain>G54</strain>
    </source>
</reference>
<sequence>MDPKKIARINELAKKKKTEGLTPEEKVEQAKLREEYIEGYRRAVRHHIEGIKIVDEEGNDVTPEKLRQVQREKGLHGRSLDDPNS</sequence>
<keyword id="KW-0963">Cytoplasm</keyword>
<protein>
    <recommendedName>
        <fullName evidence="1">UPF0291 protein SPG_1401</fullName>
    </recommendedName>
</protein>
<evidence type="ECO:0000255" key="1">
    <source>
        <dbReference type="HAMAP-Rule" id="MF_01103"/>
    </source>
</evidence>
<evidence type="ECO:0000256" key="2">
    <source>
        <dbReference type="SAM" id="MobiDB-lite"/>
    </source>
</evidence>
<gene>
    <name type="ordered locus">SPG_1401</name>
</gene>
<feature type="chain" id="PRO_1000137016" description="UPF0291 protein SPG_1401">
    <location>
        <begin position="1"/>
        <end position="85"/>
    </location>
</feature>
<feature type="region of interest" description="Disordered" evidence="2">
    <location>
        <begin position="62"/>
        <end position="85"/>
    </location>
</feature>
<comment type="subcellular location">
    <subcellularLocation>
        <location evidence="1">Cytoplasm</location>
    </subcellularLocation>
</comment>
<comment type="similarity">
    <text evidence="1">Belongs to the UPF0291 family.</text>
</comment>
<name>Y1401_STRP4</name>